<evidence type="ECO:0000269" key="1">
    <source>
    </source>
</evidence>
<evidence type="ECO:0000303" key="2">
    <source>
    </source>
</evidence>
<evidence type="ECO:0000303" key="3">
    <source>
    </source>
</evidence>
<evidence type="ECO:0000303" key="4">
    <source>
    </source>
</evidence>
<evidence type="ECO:0000305" key="5"/>
<evidence type="ECO:0000305" key="6">
    <source>
    </source>
</evidence>
<evidence type="ECO:0000305" key="7">
    <source>
    </source>
</evidence>
<proteinExistence type="evidence at protein level"/>
<sequence length="228" mass="26432">MFSHQDYLSFVNKKNKMNGIDLFKLIPDKAVKIAFFDPQYRGVLDKMSYGNEGKGRGKERAALPQMTDEIIQQFINEFERVLLPNGYLFLWVDKFHLVEGVKPWLENTPSLSVVDMLTWDKQKIGMGYRTRRRSEYLVVIQKEPKKAKITWTLHNIPDVWAEKLQSKPHTHSKPIEMQKQLILATTQEGDLILDPASGGYSVFECCKQTNRNFIGCDLIFGDDENEQD</sequence>
<gene>
    <name evidence="3" type="primary">hhaIIM</name>
</gene>
<protein>
    <recommendedName>
        <fullName evidence="4">Type II methyltransferase M.HhaII</fullName>
        <shortName evidence="3">M.HhaII</shortName>
        <ecNumber>2.1.1.72</ecNumber>
    </recommendedName>
    <alternativeName>
        <fullName>Adenine-specific methyltransferase HhaII</fullName>
    </alternativeName>
    <alternativeName>
        <fullName>Modification methylase HhaII</fullName>
    </alternativeName>
</protein>
<accession>P00473</accession>
<dbReference type="EC" id="2.1.1.72"/>
<dbReference type="EMBL" id="M24624">
    <property type="protein sequence ID" value="AAA24963.1"/>
    <property type="molecule type" value="Genomic_DNA"/>
</dbReference>
<dbReference type="EMBL" id="K00508">
    <property type="status" value="NOT_ANNOTATED_CDS"/>
    <property type="molecule type" value="Genomic_DNA"/>
</dbReference>
<dbReference type="PIR" id="JS0103">
    <property type="entry name" value="XYHIH2"/>
</dbReference>
<dbReference type="RefSeq" id="WP_005707043.1">
    <property type="nucleotide sequence ID" value="NZ_MUXY01000022.1"/>
</dbReference>
<dbReference type="SMR" id="P00473"/>
<dbReference type="STRING" id="735.B0185_09590"/>
<dbReference type="PRO" id="PR:P00473"/>
<dbReference type="GO" id="GO:0003677">
    <property type="term" value="F:DNA binding"/>
    <property type="evidence" value="ECO:0007669"/>
    <property type="project" value="UniProtKB-KW"/>
</dbReference>
<dbReference type="GO" id="GO:0008170">
    <property type="term" value="F:N-methyltransferase activity"/>
    <property type="evidence" value="ECO:0007669"/>
    <property type="project" value="InterPro"/>
</dbReference>
<dbReference type="GO" id="GO:0009007">
    <property type="term" value="F:site-specific DNA-methyltransferase (adenine-specific) activity"/>
    <property type="evidence" value="ECO:0007669"/>
    <property type="project" value="UniProtKB-EC"/>
</dbReference>
<dbReference type="GO" id="GO:0009307">
    <property type="term" value="P:DNA restriction-modification system"/>
    <property type="evidence" value="ECO:0007669"/>
    <property type="project" value="UniProtKB-KW"/>
</dbReference>
<dbReference type="GO" id="GO:0032259">
    <property type="term" value="P:methylation"/>
    <property type="evidence" value="ECO:0007669"/>
    <property type="project" value="UniProtKB-KW"/>
</dbReference>
<dbReference type="Gene3D" id="3.40.50.150">
    <property type="entry name" value="Vaccinia Virus protein VP39"/>
    <property type="match status" value="1"/>
</dbReference>
<dbReference type="InterPro" id="IPR002941">
    <property type="entry name" value="DNA_methylase_N4/N6"/>
</dbReference>
<dbReference type="InterPro" id="IPR002295">
    <property type="entry name" value="N4/N6-MTase_EcoPI_Mod-like"/>
</dbReference>
<dbReference type="InterPro" id="IPR029063">
    <property type="entry name" value="SAM-dependent_MTases_sf"/>
</dbReference>
<dbReference type="Pfam" id="PF01555">
    <property type="entry name" value="N6_N4_Mtase"/>
    <property type="match status" value="1"/>
</dbReference>
<dbReference type="PRINTS" id="PR00506">
    <property type="entry name" value="D21N6MTFRASE"/>
</dbReference>
<dbReference type="SUPFAM" id="SSF53335">
    <property type="entry name" value="S-adenosyl-L-methionine-dependent methyltransferases"/>
    <property type="match status" value="1"/>
</dbReference>
<reference key="1">
    <citation type="journal article" date="1983" name="Gene">
        <title>The nucleotide sequence of the HhaII restriction and modification genes from Haemophilus haemolyticus.</title>
        <authorList>
            <person name="Schoner B."/>
            <person name="Kelly S."/>
            <person name="Smith H.O."/>
        </authorList>
    </citation>
    <scope>NUCLEOTIDE SEQUENCE [GENOMIC DNA]</scope>
    <scope>FUNCTION</scope>
    <source>
        <strain>ATCC 10014 / CCUG 3716 / NCTC 8479 / 536</strain>
    </source>
</reference>
<reference key="2">
    <citation type="journal article" date="1988" name="Gene">
        <title>Overproduction and purification of the M.HhaII methyltransferase from Haemophilus haemolyticus.</title>
        <authorList>
            <person name="Chandrasegaran S."/>
            <person name="Wu L.P."/>
            <person name="Valda E."/>
            <person name="Smith H.O."/>
        </authorList>
    </citation>
    <scope>NUCLEOTIDE SEQUENCE [GENOMIC DNA]</scope>
    <scope>PROTEIN SEQUENCE OF 2-51</scope>
    <scope>FUNCTION</scope>
    <source>
        <strain>ATCC 10014 / CCUG 3716 / NCTC 8479 / 536</strain>
    </source>
</reference>
<reference key="3">
    <citation type="journal article" date="2003" name="Nucleic Acids Res.">
        <title>A nomenclature for restriction enzymes, DNA methyltransferases, homing endonucleases and their genes.</title>
        <authorList>
            <person name="Roberts R.J."/>
            <person name="Belfort M."/>
            <person name="Bestor T."/>
            <person name="Bhagwat A.S."/>
            <person name="Bickle T.A."/>
            <person name="Bitinaite J."/>
            <person name="Blumenthal R.M."/>
            <person name="Degtyarev S.K."/>
            <person name="Dryden D.T."/>
            <person name="Dybvig K."/>
            <person name="Firman K."/>
            <person name="Gromova E.S."/>
            <person name="Gumport R.I."/>
            <person name="Halford S.E."/>
            <person name="Hattman S."/>
            <person name="Heitman J."/>
            <person name="Hornby D.P."/>
            <person name="Janulaitis A."/>
            <person name="Jeltsch A."/>
            <person name="Josephsen J."/>
            <person name="Kiss A."/>
            <person name="Klaenhammer T.R."/>
            <person name="Kobayashi I."/>
            <person name="Kong H."/>
            <person name="Krueger D.H."/>
            <person name="Lacks S."/>
            <person name="Marinus M.G."/>
            <person name="Miyahara M."/>
            <person name="Morgan R.D."/>
            <person name="Murray N.E."/>
            <person name="Nagaraja V."/>
            <person name="Piekarowicz A."/>
            <person name="Pingoud A."/>
            <person name="Raleigh E."/>
            <person name="Rao D.N."/>
            <person name="Reich N."/>
            <person name="Repin V.E."/>
            <person name="Selker E.U."/>
            <person name="Shaw P.C."/>
            <person name="Stein D.C."/>
            <person name="Stoddard B.L."/>
            <person name="Szybalski W."/>
            <person name="Trautner T.A."/>
            <person name="Van Etten J.L."/>
            <person name="Vitor J.M."/>
            <person name="Wilson G.G."/>
            <person name="Xu S.Y."/>
        </authorList>
    </citation>
    <scope>NOMENCLATURE</scope>
    <scope>SUBTYPE</scope>
</reference>
<name>MTH2_HAEPH</name>
<keyword id="KW-0903">Direct protein sequencing</keyword>
<keyword id="KW-0238">DNA-binding</keyword>
<keyword id="KW-0489">Methyltransferase</keyword>
<keyword id="KW-0680">Restriction system</keyword>
<keyword id="KW-0949">S-adenosyl-L-methionine</keyword>
<keyword id="KW-0808">Transferase</keyword>
<organism>
    <name type="scientific">Haemophilus parahaemolyticus</name>
    <dbReference type="NCBI Taxonomy" id="735"/>
    <lineage>
        <taxon>Bacteria</taxon>
        <taxon>Pseudomonadati</taxon>
        <taxon>Pseudomonadota</taxon>
        <taxon>Gammaproteobacteria</taxon>
        <taxon>Pasteurellales</taxon>
        <taxon>Pasteurellaceae</taxon>
        <taxon>Haemophilus</taxon>
    </lineage>
</organism>
<comment type="function">
    <text evidence="2 6 7">A beta subtype methylase, recognizes the double-stranded sequence 5'-GANTC-3', methylates A-2 on both strands, and protects the DNA from cleavage by the HhaII endonuclease.</text>
</comment>
<comment type="catalytic activity">
    <reaction>
        <text>a 2'-deoxyadenosine in DNA + S-adenosyl-L-methionine = an N(6)-methyl-2'-deoxyadenosine in DNA + S-adenosyl-L-homocysteine + H(+)</text>
        <dbReference type="Rhea" id="RHEA:15197"/>
        <dbReference type="Rhea" id="RHEA-COMP:12418"/>
        <dbReference type="Rhea" id="RHEA-COMP:12419"/>
        <dbReference type="ChEBI" id="CHEBI:15378"/>
        <dbReference type="ChEBI" id="CHEBI:57856"/>
        <dbReference type="ChEBI" id="CHEBI:59789"/>
        <dbReference type="ChEBI" id="CHEBI:90615"/>
        <dbReference type="ChEBI" id="CHEBI:90616"/>
        <dbReference type="EC" id="2.1.1.72"/>
    </reaction>
</comment>
<comment type="similarity">
    <text evidence="5">Belongs to the N(4)/N(6)-methyltransferase family.</text>
</comment>
<comment type="caution">
    <text evidence="5">Strain ATCC 10014 was originally thought to originate from H.haemolyticus.</text>
</comment>
<comment type="sequence caution" evidence="5">
    <conflict type="frameshift">
        <sequence resource="EMBL" id="K00508"/>
    </conflict>
</comment>
<feature type="initiator methionine" description="Removed" evidence="1">
    <location>
        <position position="1"/>
    </location>
</feature>
<feature type="chain" id="PRO_0000087972" description="Type II methyltransferase M.HhaII">
    <location>
        <begin position="2"/>
        <end position="228"/>
    </location>
</feature>